<accession>Q9HR73</accession>
<feature type="chain" id="PRO_0000428977" description="Putative dimethyl sulfoxide reductase iron-sulfur subunit B">
    <location>
        <begin position="1"/>
        <end position="262"/>
    </location>
</feature>
<feature type="domain" description="4Fe-4S ferredoxin-type 1" evidence="2">
    <location>
        <begin position="4"/>
        <end position="34"/>
    </location>
</feature>
<feature type="domain" description="4Fe-4S ferredoxin-type 2" evidence="2">
    <location>
        <begin position="62"/>
        <end position="93"/>
    </location>
</feature>
<feature type="domain" description="4Fe-4S ferredoxin-type 3" evidence="2">
    <location>
        <begin position="94"/>
        <end position="123"/>
    </location>
</feature>
<feature type="region of interest" description="Disordered" evidence="3">
    <location>
        <begin position="209"/>
        <end position="262"/>
    </location>
</feature>
<feature type="binding site" evidence="1">
    <location>
        <position position="13"/>
    </location>
    <ligand>
        <name>[4Fe-4S] cluster</name>
        <dbReference type="ChEBI" id="CHEBI:49883"/>
        <label>1</label>
    </ligand>
</feature>
<feature type="binding site" evidence="1">
    <location>
        <position position="16"/>
    </location>
    <ligand>
        <name>[4Fe-4S] cluster</name>
        <dbReference type="ChEBI" id="CHEBI:49883"/>
        <label>1</label>
    </ligand>
</feature>
<feature type="binding site" evidence="1">
    <location>
        <position position="19"/>
    </location>
    <ligand>
        <name>[4Fe-4S] cluster</name>
        <dbReference type="ChEBI" id="CHEBI:49883"/>
        <label>1</label>
    </ligand>
</feature>
<feature type="binding site" evidence="1">
    <location>
        <position position="23"/>
    </location>
    <ligand>
        <name>[4Fe-4S] cluster</name>
        <dbReference type="ChEBI" id="CHEBI:49883"/>
        <label>2</label>
    </ligand>
</feature>
<feature type="binding site" evidence="1">
    <location>
        <position position="71"/>
    </location>
    <ligand>
        <name>[4Fe-4S] cluster</name>
        <dbReference type="ChEBI" id="CHEBI:49883"/>
        <label>3</label>
    </ligand>
</feature>
<feature type="binding site" evidence="1">
    <location>
        <position position="74"/>
    </location>
    <ligand>
        <name>[4Fe-4S] cluster</name>
        <dbReference type="ChEBI" id="CHEBI:49883"/>
        <label>3</label>
    </ligand>
</feature>
<feature type="binding site" evidence="1">
    <location>
        <position position="79"/>
    </location>
    <ligand>
        <name>[4Fe-4S] cluster</name>
        <dbReference type="ChEBI" id="CHEBI:49883"/>
        <label>3</label>
    </ligand>
</feature>
<feature type="binding site" evidence="1">
    <location>
        <position position="83"/>
    </location>
    <ligand>
        <name>[4Fe-4S] cluster</name>
        <dbReference type="ChEBI" id="CHEBI:49883"/>
        <label>4</label>
    </ligand>
</feature>
<feature type="binding site" evidence="1">
    <location>
        <position position="103"/>
    </location>
    <ligand>
        <name>[4Fe-4S] cluster</name>
        <dbReference type="ChEBI" id="CHEBI:49883"/>
        <label>4</label>
    </ligand>
</feature>
<feature type="binding site" evidence="1">
    <location>
        <position position="106"/>
    </location>
    <ligand>
        <name>[4Fe-4S] cluster</name>
        <dbReference type="ChEBI" id="CHEBI:49883"/>
        <label>4</label>
    </ligand>
</feature>
<feature type="binding site" evidence="1">
    <location>
        <position position="109"/>
    </location>
    <ligand>
        <name>[4Fe-4S] cluster</name>
        <dbReference type="ChEBI" id="CHEBI:49883"/>
        <label>4</label>
    </ligand>
</feature>
<feature type="binding site" evidence="1">
    <location>
        <position position="113"/>
    </location>
    <ligand>
        <name>[4Fe-4S] cluster</name>
        <dbReference type="ChEBI" id="CHEBI:49883"/>
        <label>3</label>
    </ligand>
</feature>
<feature type="binding site" evidence="1">
    <location>
        <position position="147"/>
    </location>
    <ligand>
        <name>[4Fe-4S] cluster</name>
        <dbReference type="ChEBI" id="CHEBI:49883"/>
        <label>2</label>
    </ligand>
</feature>
<feature type="binding site" evidence="1">
    <location>
        <position position="150"/>
    </location>
    <ligand>
        <name>[4Fe-4S] cluster</name>
        <dbReference type="ChEBI" id="CHEBI:49883"/>
        <label>2</label>
    </ligand>
</feature>
<feature type="binding site" evidence="1">
    <location>
        <position position="162"/>
    </location>
    <ligand>
        <name>[4Fe-4S] cluster</name>
        <dbReference type="ChEBI" id="CHEBI:49883"/>
        <label>2</label>
    </ligand>
</feature>
<feature type="binding site" evidence="1">
    <location>
        <position position="166"/>
    </location>
    <ligand>
        <name>[4Fe-4S] cluster</name>
        <dbReference type="ChEBI" id="CHEBI:49883"/>
        <label>1</label>
    </ligand>
</feature>
<reference key="1">
    <citation type="journal article" date="2000" name="Proc. Natl. Acad. Sci. U.S.A.">
        <title>Genome sequence of Halobacterium species NRC-1.</title>
        <authorList>
            <person name="Ng W.V."/>
            <person name="Kennedy S.P."/>
            <person name="Mahairas G.G."/>
            <person name="Berquist B."/>
            <person name="Pan M."/>
            <person name="Shukla H.D."/>
            <person name="Lasky S.R."/>
            <person name="Baliga N.S."/>
            <person name="Thorsson V."/>
            <person name="Sbrogna J."/>
            <person name="Swartzell S."/>
            <person name="Weir D."/>
            <person name="Hall J."/>
            <person name="Dahl T.A."/>
            <person name="Welti R."/>
            <person name="Goo Y.A."/>
            <person name="Leithauser B."/>
            <person name="Keller K."/>
            <person name="Cruz R."/>
            <person name="Danson M.J."/>
            <person name="Hough D.W."/>
            <person name="Maddocks D.G."/>
            <person name="Jablonski P.E."/>
            <person name="Krebs M.P."/>
            <person name="Angevine C.M."/>
            <person name="Dale H."/>
            <person name="Isenbarger T.A."/>
            <person name="Peck R.F."/>
            <person name="Pohlschroder M."/>
            <person name="Spudich J.L."/>
            <person name="Jung K.-H."/>
            <person name="Alam M."/>
            <person name="Freitas T."/>
            <person name="Hou S."/>
            <person name="Daniels C.J."/>
            <person name="Dennis P.P."/>
            <person name="Omer A.D."/>
            <person name="Ebhardt H."/>
            <person name="Lowe T.M."/>
            <person name="Liang P."/>
            <person name="Riley M."/>
            <person name="Hood L."/>
            <person name="DasSarma S."/>
        </authorList>
    </citation>
    <scope>NUCLEOTIDE SEQUENCE [LARGE SCALE GENOMIC DNA]</scope>
    <source>
        <strain>ATCC 700922 / JCM 11081 / NRC-1</strain>
    </source>
</reference>
<reference key="2">
    <citation type="journal article" date="2005" name="J. Bacteriol.">
        <title>Genomic analysis of anaerobic respiration in the archaeon Halobacterium sp. strain NRC-1: dimethyl sulfoxide and trimethylamine N-oxide as terminal electron acceptors.</title>
        <authorList>
            <person name="Muller J.A."/>
            <person name="DasSarma S."/>
        </authorList>
    </citation>
    <scope>PUTATIVE FUNCTION</scope>
    <scope>INDUCTION</scope>
    <source>
        <strain>ATCC 700922 / JCM 11081 / NRC-1</strain>
    </source>
</reference>
<sequence>MTNYGLVIDQERCIGCQSCSLTCKQENNVPMGQFWNRVLTQGGDHVDTPSGDYPEGGDGGTLEMTYQPTACQHCENAPCVKVCPVNATYTRDDGIVEIDYDKCMGCRYCMAACPYNARVFNWDEPEHRPEDGTGDVAERPQGVVEKCTFCSHRVEDGLDPACVVNCPADARIFGDLDDDDSTVSKYIAEYDTHQLLDEKGTDPSTYYINGEMSPGRPWKSKKLESELDDDEAAKAARRRSGSVENGYDVTPHVPAETAGGDD</sequence>
<comment type="function">
    <text>Dimethyl sulfoxide (DMSO) reductase catalyzes the reduction of dimethyl sulfoxide (DMSO) to dimethyl sulfide (DMS) during anaerobic respiration; it can also use trimethylamine N-oxide (TMAO) as terminal electron acceptor. Subunit B is proposed to be involved in electron transfer.</text>
</comment>
<comment type="cofactor">
    <cofactor evidence="1">
        <name>[4Fe-4S] cluster</name>
        <dbReference type="ChEBI" id="CHEBI:49883"/>
    </cofactor>
    <text evidence="1">Binds 4 [4Fe-4S] clusters.</text>
</comment>
<comment type="subunit">
    <text>Probable multiprotein complex that likely consists of DmsA, DmsB and DmsC.</text>
</comment>
<comment type="subcellular location">
    <subcellularLocation>
        <location evidence="5">Cell membrane</location>
        <topology evidence="5">Peripheral membrane protein</topology>
    </subcellularLocation>
</comment>
<comment type="induction">
    <text evidence="4">By anaerobic conditions. Its expression is under the control of DmsR.</text>
</comment>
<organism>
    <name type="scientific">Halobacterium salinarum (strain ATCC 700922 / JCM 11081 / NRC-1)</name>
    <name type="common">Halobacterium halobium</name>
    <dbReference type="NCBI Taxonomy" id="64091"/>
    <lineage>
        <taxon>Archaea</taxon>
        <taxon>Methanobacteriati</taxon>
        <taxon>Methanobacteriota</taxon>
        <taxon>Stenosarchaea group</taxon>
        <taxon>Halobacteria</taxon>
        <taxon>Halobacteriales</taxon>
        <taxon>Halobacteriaceae</taxon>
        <taxon>Halobacterium</taxon>
        <taxon>Halobacterium salinarum NRC-34001</taxon>
    </lineage>
</organism>
<name>DMSB_HALSA</name>
<dbReference type="EMBL" id="AE004437">
    <property type="protein sequence ID" value="AAG19285.1"/>
    <property type="molecule type" value="Genomic_DNA"/>
</dbReference>
<dbReference type="PIR" id="A84240">
    <property type="entry name" value="A84240"/>
</dbReference>
<dbReference type="SMR" id="Q9HR73"/>
<dbReference type="FunCoup" id="Q9HR73">
    <property type="interactions" value="27"/>
</dbReference>
<dbReference type="STRING" id="64091.VNG_0830G"/>
<dbReference type="TCDB" id="5.A.3.3.3">
    <property type="family name" value="the prokaryotic molybdopterin-containing oxidoreductase (pmo) family"/>
</dbReference>
<dbReference type="PaxDb" id="64091-VNG_0830G"/>
<dbReference type="KEGG" id="hal:VNG_0830G"/>
<dbReference type="PATRIC" id="fig|64091.14.peg.638"/>
<dbReference type="HOGENOM" id="CLU_043374_1_2_2"/>
<dbReference type="InParanoid" id="Q9HR73"/>
<dbReference type="OrthoDB" id="2837at2157"/>
<dbReference type="PhylomeDB" id="Q9HR73"/>
<dbReference type="Proteomes" id="UP000000554">
    <property type="component" value="Chromosome"/>
</dbReference>
<dbReference type="GO" id="GO:0005886">
    <property type="term" value="C:plasma membrane"/>
    <property type="evidence" value="ECO:0007669"/>
    <property type="project" value="UniProtKB-SubCell"/>
</dbReference>
<dbReference type="GO" id="GO:0051539">
    <property type="term" value="F:4 iron, 4 sulfur cluster binding"/>
    <property type="evidence" value="ECO:0007669"/>
    <property type="project" value="UniProtKB-KW"/>
</dbReference>
<dbReference type="GO" id="GO:0046872">
    <property type="term" value="F:metal ion binding"/>
    <property type="evidence" value="ECO:0007669"/>
    <property type="project" value="UniProtKB-KW"/>
</dbReference>
<dbReference type="GO" id="GO:0016491">
    <property type="term" value="F:oxidoreductase activity"/>
    <property type="evidence" value="ECO:0007669"/>
    <property type="project" value="UniProtKB-ARBA"/>
</dbReference>
<dbReference type="CDD" id="cd10551">
    <property type="entry name" value="PsrB"/>
    <property type="match status" value="1"/>
</dbReference>
<dbReference type="Gene3D" id="3.30.70.20">
    <property type="match status" value="2"/>
</dbReference>
<dbReference type="InterPro" id="IPR017896">
    <property type="entry name" value="4Fe4S_Fe-S-bd"/>
</dbReference>
<dbReference type="InterPro" id="IPR017900">
    <property type="entry name" value="4Fe4S_Fe_S_CS"/>
</dbReference>
<dbReference type="InterPro" id="IPR054822">
    <property type="entry name" value="DsrO-like"/>
</dbReference>
<dbReference type="InterPro" id="IPR050954">
    <property type="entry name" value="ET_IronSulfur_Cluster-Binding"/>
</dbReference>
<dbReference type="NCBIfam" id="NF045797">
    <property type="entry name" value="DsrO"/>
    <property type="match status" value="1"/>
</dbReference>
<dbReference type="PANTHER" id="PTHR43177">
    <property type="entry name" value="PROTEIN NRFC"/>
    <property type="match status" value="1"/>
</dbReference>
<dbReference type="PANTHER" id="PTHR43177:SF3">
    <property type="entry name" value="PROTEIN NRFC HOMOLOG"/>
    <property type="match status" value="1"/>
</dbReference>
<dbReference type="Pfam" id="PF13247">
    <property type="entry name" value="Fer4_11"/>
    <property type="match status" value="2"/>
</dbReference>
<dbReference type="SUPFAM" id="SSF54862">
    <property type="entry name" value="4Fe-4S ferredoxins"/>
    <property type="match status" value="1"/>
</dbReference>
<dbReference type="PROSITE" id="PS00198">
    <property type="entry name" value="4FE4S_FER_1"/>
    <property type="match status" value="1"/>
</dbReference>
<dbReference type="PROSITE" id="PS51379">
    <property type="entry name" value="4FE4S_FER_2"/>
    <property type="match status" value="3"/>
</dbReference>
<evidence type="ECO:0000250" key="1"/>
<evidence type="ECO:0000255" key="2">
    <source>
        <dbReference type="PROSITE-ProRule" id="PRU00711"/>
    </source>
</evidence>
<evidence type="ECO:0000256" key="3">
    <source>
        <dbReference type="SAM" id="MobiDB-lite"/>
    </source>
</evidence>
<evidence type="ECO:0000269" key="4">
    <source>
    </source>
</evidence>
<evidence type="ECO:0000305" key="5"/>
<proteinExistence type="evidence at transcript level"/>
<gene>
    <name type="primary">dmsB</name>
    <name type="synonym">hmoA</name>
    <name type="ordered locus">VNG_0830G</name>
</gene>
<protein>
    <recommendedName>
        <fullName>Putative dimethyl sulfoxide reductase iron-sulfur subunit B</fullName>
        <shortName>DMSO reductase subunit B</shortName>
    </recommendedName>
</protein>
<keyword id="KW-0004">4Fe-4S</keyword>
<keyword id="KW-1003">Cell membrane</keyword>
<keyword id="KW-0249">Electron transport</keyword>
<keyword id="KW-0408">Iron</keyword>
<keyword id="KW-0411">Iron-sulfur</keyword>
<keyword id="KW-0472">Membrane</keyword>
<keyword id="KW-0479">Metal-binding</keyword>
<keyword id="KW-1185">Reference proteome</keyword>
<keyword id="KW-0677">Repeat</keyword>
<keyword id="KW-0813">Transport</keyword>